<proteinExistence type="evidence at protein level"/>
<feature type="chain" id="PRO_0000162383" description="Phenazine biosynthesis-like domain-containing protein">
    <location>
        <begin position="1"/>
        <end position="288"/>
    </location>
</feature>
<feature type="active site" evidence="1">
    <location>
        <position position="46"/>
    </location>
</feature>
<feature type="splice variant" id="VSP_053822" description="In isoform 2." evidence="4">
    <original>AFQCSHRGGELGISLRPDGRVDIRGGAAVVLEGTLTA</original>
    <variation>GRTALYQFLFYLPNSKLVFLLICTIPLKM</variation>
    <location>
        <begin position="252"/>
        <end position="288"/>
    </location>
</feature>
<feature type="sequence variant" id="VAR_022684" description="In dbSNP:rs12359690." evidence="2">
    <original>R</original>
    <variation>C</variation>
    <location>
        <position position="17"/>
    </location>
</feature>
<feature type="sequence variant" id="VAR_072403" description="In dbSNP:rs756247151." evidence="3">
    <original>S</original>
    <variation>I</variation>
    <location>
        <position position="62"/>
    </location>
</feature>
<feature type="sequence variant" id="VAR_022685" description="In dbSNP:rs4142048." evidence="2">
    <original>H</original>
    <variation>R</variation>
    <location>
        <position position="257"/>
    </location>
</feature>
<feature type="sequence conflict" description="In Ref. 6; AA sequence." evidence="4" ref="6">
    <original>TA</original>
    <variation>NV</variation>
    <location>
        <begin position="12"/>
        <end position="13"/>
    </location>
</feature>
<reference key="1">
    <citation type="journal article" date="2004" name="Nat. Genet.">
        <title>Complete sequencing and characterization of 21,243 full-length human cDNAs.</title>
        <authorList>
            <person name="Ota T."/>
            <person name="Suzuki Y."/>
            <person name="Nishikawa T."/>
            <person name="Otsuki T."/>
            <person name="Sugiyama T."/>
            <person name="Irie R."/>
            <person name="Wakamatsu A."/>
            <person name="Hayashi K."/>
            <person name="Sato H."/>
            <person name="Nagai K."/>
            <person name="Kimura K."/>
            <person name="Makita H."/>
            <person name="Sekine M."/>
            <person name="Obayashi M."/>
            <person name="Nishi T."/>
            <person name="Shibahara T."/>
            <person name="Tanaka T."/>
            <person name="Ishii S."/>
            <person name="Yamamoto J."/>
            <person name="Saito K."/>
            <person name="Kawai Y."/>
            <person name="Isono Y."/>
            <person name="Nakamura Y."/>
            <person name="Nagahari K."/>
            <person name="Murakami K."/>
            <person name="Yasuda T."/>
            <person name="Iwayanagi T."/>
            <person name="Wagatsuma M."/>
            <person name="Shiratori A."/>
            <person name="Sudo H."/>
            <person name="Hosoiri T."/>
            <person name="Kaku Y."/>
            <person name="Kodaira H."/>
            <person name="Kondo H."/>
            <person name="Sugawara M."/>
            <person name="Takahashi M."/>
            <person name="Kanda K."/>
            <person name="Yokoi T."/>
            <person name="Furuya T."/>
            <person name="Kikkawa E."/>
            <person name="Omura Y."/>
            <person name="Abe K."/>
            <person name="Kamihara K."/>
            <person name="Katsuta N."/>
            <person name="Sato K."/>
            <person name="Tanikawa M."/>
            <person name="Yamazaki M."/>
            <person name="Ninomiya K."/>
            <person name="Ishibashi T."/>
            <person name="Yamashita H."/>
            <person name="Murakawa K."/>
            <person name="Fujimori K."/>
            <person name="Tanai H."/>
            <person name="Kimata M."/>
            <person name="Watanabe M."/>
            <person name="Hiraoka S."/>
            <person name="Chiba Y."/>
            <person name="Ishida S."/>
            <person name="Ono Y."/>
            <person name="Takiguchi S."/>
            <person name="Watanabe S."/>
            <person name="Yosida M."/>
            <person name="Hotuta T."/>
            <person name="Kusano J."/>
            <person name="Kanehori K."/>
            <person name="Takahashi-Fujii A."/>
            <person name="Hara H."/>
            <person name="Tanase T.-O."/>
            <person name="Nomura Y."/>
            <person name="Togiya S."/>
            <person name="Komai F."/>
            <person name="Hara R."/>
            <person name="Takeuchi K."/>
            <person name="Arita M."/>
            <person name="Imose N."/>
            <person name="Musashino K."/>
            <person name="Yuuki H."/>
            <person name="Oshima A."/>
            <person name="Sasaki N."/>
            <person name="Aotsuka S."/>
            <person name="Yoshikawa Y."/>
            <person name="Matsunawa H."/>
            <person name="Ichihara T."/>
            <person name="Shiohata N."/>
            <person name="Sano S."/>
            <person name="Moriya S."/>
            <person name="Momiyama H."/>
            <person name="Satoh N."/>
            <person name="Takami S."/>
            <person name="Terashima Y."/>
            <person name="Suzuki O."/>
            <person name="Nakagawa S."/>
            <person name="Senoh A."/>
            <person name="Mizoguchi H."/>
            <person name="Goto Y."/>
            <person name="Shimizu F."/>
            <person name="Wakebe H."/>
            <person name="Hishigaki H."/>
            <person name="Watanabe T."/>
            <person name="Sugiyama A."/>
            <person name="Takemoto M."/>
            <person name="Kawakami B."/>
            <person name="Yamazaki M."/>
            <person name="Watanabe K."/>
            <person name="Kumagai A."/>
            <person name="Itakura S."/>
            <person name="Fukuzumi Y."/>
            <person name="Fujimori Y."/>
            <person name="Komiyama M."/>
            <person name="Tashiro H."/>
            <person name="Tanigami A."/>
            <person name="Fujiwara T."/>
            <person name="Ono T."/>
            <person name="Yamada K."/>
            <person name="Fujii Y."/>
            <person name="Ozaki K."/>
            <person name="Hirao M."/>
            <person name="Ohmori Y."/>
            <person name="Kawabata A."/>
            <person name="Hikiji T."/>
            <person name="Kobatake N."/>
            <person name="Inagaki H."/>
            <person name="Ikema Y."/>
            <person name="Okamoto S."/>
            <person name="Okitani R."/>
            <person name="Kawakami T."/>
            <person name="Noguchi S."/>
            <person name="Itoh T."/>
            <person name="Shigeta K."/>
            <person name="Senba T."/>
            <person name="Matsumura K."/>
            <person name="Nakajima Y."/>
            <person name="Mizuno T."/>
            <person name="Morinaga M."/>
            <person name="Sasaki M."/>
            <person name="Togashi T."/>
            <person name="Oyama M."/>
            <person name="Hata H."/>
            <person name="Watanabe M."/>
            <person name="Komatsu T."/>
            <person name="Mizushima-Sugano J."/>
            <person name="Satoh T."/>
            <person name="Shirai Y."/>
            <person name="Takahashi Y."/>
            <person name="Nakagawa K."/>
            <person name="Okumura K."/>
            <person name="Nagase T."/>
            <person name="Nomura N."/>
            <person name="Kikuchi H."/>
            <person name="Masuho Y."/>
            <person name="Yamashita R."/>
            <person name="Nakai K."/>
            <person name="Yada T."/>
            <person name="Nakamura Y."/>
            <person name="Ohara O."/>
            <person name="Isogai T."/>
            <person name="Sugano S."/>
        </authorList>
    </citation>
    <scope>NUCLEOTIDE SEQUENCE [LARGE SCALE MRNA] (ISOFORM 1)</scope>
</reference>
<reference key="2">
    <citation type="journal article" date="2004" name="Nature">
        <title>The DNA sequence and comparative analysis of human chromosome 10.</title>
        <authorList>
            <person name="Deloukas P."/>
            <person name="Earthrowl M.E."/>
            <person name="Grafham D.V."/>
            <person name="Rubenfield M."/>
            <person name="French L."/>
            <person name="Steward C.A."/>
            <person name="Sims S.K."/>
            <person name="Jones M.C."/>
            <person name="Searle S."/>
            <person name="Scott C."/>
            <person name="Howe K."/>
            <person name="Hunt S.E."/>
            <person name="Andrews T.D."/>
            <person name="Gilbert J.G.R."/>
            <person name="Swarbreck D."/>
            <person name="Ashurst J.L."/>
            <person name="Taylor A."/>
            <person name="Battles J."/>
            <person name="Bird C.P."/>
            <person name="Ainscough R."/>
            <person name="Almeida J.P."/>
            <person name="Ashwell R.I.S."/>
            <person name="Ambrose K.D."/>
            <person name="Babbage A.K."/>
            <person name="Bagguley C.L."/>
            <person name="Bailey J."/>
            <person name="Banerjee R."/>
            <person name="Bates K."/>
            <person name="Beasley H."/>
            <person name="Bray-Allen S."/>
            <person name="Brown A.J."/>
            <person name="Brown J.Y."/>
            <person name="Burford D.C."/>
            <person name="Burrill W."/>
            <person name="Burton J."/>
            <person name="Cahill P."/>
            <person name="Camire D."/>
            <person name="Carter N.P."/>
            <person name="Chapman J.C."/>
            <person name="Clark S.Y."/>
            <person name="Clarke G."/>
            <person name="Clee C.M."/>
            <person name="Clegg S."/>
            <person name="Corby N."/>
            <person name="Coulson A."/>
            <person name="Dhami P."/>
            <person name="Dutta I."/>
            <person name="Dunn M."/>
            <person name="Faulkner L."/>
            <person name="Frankish A."/>
            <person name="Frankland J.A."/>
            <person name="Garner P."/>
            <person name="Garnett J."/>
            <person name="Gribble S."/>
            <person name="Griffiths C."/>
            <person name="Grocock R."/>
            <person name="Gustafson E."/>
            <person name="Hammond S."/>
            <person name="Harley J.L."/>
            <person name="Hart E."/>
            <person name="Heath P.D."/>
            <person name="Ho T.P."/>
            <person name="Hopkins B."/>
            <person name="Horne J."/>
            <person name="Howden P.J."/>
            <person name="Huckle E."/>
            <person name="Hynds C."/>
            <person name="Johnson C."/>
            <person name="Johnson D."/>
            <person name="Kana A."/>
            <person name="Kay M."/>
            <person name="Kimberley A.M."/>
            <person name="Kershaw J.K."/>
            <person name="Kokkinaki M."/>
            <person name="Laird G.K."/>
            <person name="Lawlor S."/>
            <person name="Lee H.M."/>
            <person name="Leongamornlert D.A."/>
            <person name="Laird G."/>
            <person name="Lloyd C."/>
            <person name="Lloyd D.M."/>
            <person name="Loveland J."/>
            <person name="Lovell J."/>
            <person name="McLaren S."/>
            <person name="McLay K.E."/>
            <person name="McMurray A."/>
            <person name="Mashreghi-Mohammadi M."/>
            <person name="Matthews L."/>
            <person name="Milne S."/>
            <person name="Nickerson T."/>
            <person name="Nguyen M."/>
            <person name="Overton-Larty E."/>
            <person name="Palmer S.A."/>
            <person name="Pearce A.V."/>
            <person name="Peck A.I."/>
            <person name="Pelan S."/>
            <person name="Phillimore B."/>
            <person name="Porter K."/>
            <person name="Rice C.M."/>
            <person name="Rogosin A."/>
            <person name="Ross M.T."/>
            <person name="Sarafidou T."/>
            <person name="Sehra H.K."/>
            <person name="Shownkeen R."/>
            <person name="Skuce C.D."/>
            <person name="Smith M."/>
            <person name="Standring L."/>
            <person name="Sycamore N."/>
            <person name="Tester J."/>
            <person name="Thorpe A."/>
            <person name="Torcasso W."/>
            <person name="Tracey A."/>
            <person name="Tromans A."/>
            <person name="Tsolas J."/>
            <person name="Wall M."/>
            <person name="Walsh J."/>
            <person name="Wang H."/>
            <person name="Weinstock K."/>
            <person name="West A.P."/>
            <person name="Willey D.L."/>
            <person name="Whitehead S.L."/>
            <person name="Wilming L."/>
            <person name="Wray P.W."/>
            <person name="Young L."/>
            <person name="Chen Y."/>
            <person name="Lovering R.C."/>
            <person name="Moschonas N.K."/>
            <person name="Siebert R."/>
            <person name="Fechtel K."/>
            <person name="Bentley D."/>
            <person name="Durbin R.M."/>
            <person name="Hubbard T."/>
            <person name="Doucette-Stamm L."/>
            <person name="Beck S."/>
            <person name="Smith D.R."/>
            <person name="Rogers J."/>
        </authorList>
    </citation>
    <scope>NUCLEOTIDE SEQUENCE [LARGE SCALE GENOMIC DNA]</scope>
</reference>
<reference key="3">
    <citation type="submission" date="2005-07" db="EMBL/GenBank/DDBJ databases">
        <authorList>
            <person name="Mural R.J."/>
            <person name="Istrail S."/>
            <person name="Sutton G.G."/>
            <person name="Florea L."/>
            <person name="Halpern A.L."/>
            <person name="Mobarry C.M."/>
            <person name="Lippert R."/>
            <person name="Walenz B."/>
            <person name="Shatkay H."/>
            <person name="Dew I."/>
            <person name="Miller J.R."/>
            <person name="Flanigan M.J."/>
            <person name="Edwards N.J."/>
            <person name="Bolanos R."/>
            <person name="Fasulo D."/>
            <person name="Halldorsson B.V."/>
            <person name="Hannenhalli S."/>
            <person name="Turner R."/>
            <person name="Yooseph S."/>
            <person name="Lu F."/>
            <person name="Nusskern D.R."/>
            <person name="Shue B.C."/>
            <person name="Zheng X.H."/>
            <person name="Zhong F."/>
            <person name="Delcher A.L."/>
            <person name="Huson D.H."/>
            <person name="Kravitz S.A."/>
            <person name="Mouchard L."/>
            <person name="Reinert K."/>
            <person name="Remington K.A."/>
            <person name="Clark A.G."/>
            <person name="Waterman M.S."/>
            <person name="Eichler E.E."/>
            <person name="Adams M.D."/>
            <person name="Hunkapiller M.W."/>
            <person name="Myers E.W."/>
            <person name="Venter J.C."/>
        </authorList>
    </citation>
    <scope>NUCLEOTIDE SEQUENCE [LARGE SCALE GENOMIC DNA]</scope>
</reference>
<reference key="4">
    <citation type="journal article" date="2004" name="Genome Res.">
        <title>The status, quality, and expansion of the NIH full-length cDNA project: the Mammalian Gene Collection (MGC).</title>
        <authorList>
            <consortium name="The MGC Project Team"/>
        </authorList>
    </citation>
    <scope>NUCLEOTIDE SEQUENCE [LARGE SCALE MRNA] (ISOFORM 1)</scope>
    <source>
        <tissue>Lung</tissue>
    </source>
</reference>
<reference key="5">
    <citation type="journal article" date="2001" name="J. Hum. Genet.">
        <title>Cloning and sequencing of a novel human gene which encodes a putative hydroxylase.</title>
        <authorList>
            <person name="Iriyama C."/>
            <person name="Matsuda S."/>
            <person name="Katsumata R."/>
            <person name="Hamaguchi M."/>
        </authorList>
    </citation>
    <scope>NUCLEOTIDE SEQUENCE [MRNA] OF 44-288 (ISOFORM 1)</scope>
    <source>
        <tissue>Liver</tissue>
    </source>
</reference>
<reference key="6">
    <citation type="journal article" date="1992" name="Electrophoresis">
        <title>Human liver protein map: a reference database established by microsequencing and gel comparison.</title>
        <authorList>
            <person name="Hochstrasser D.F."/>
            <person name="Frutiger S."/>
            <person name="Paquet N."/>
            <person name="Bairoch A."/>
            <person name="Ravier F."/>
            <person name="Pasquali C."/>
            <person name="Sanchez J.-C."/>
            <person name="Tissot J.-D."/>
            <person name="Bjellqvist B."/>
            <person name="Vargas R."/>
            <person name="Appel R.D."/>
            <person name="Hughes G.J."/>
        </authorList>
    </citation>
    <scope>PROTEIN SEQUENCE OF 1-14</scope>
    <source>
        <tissue>Liver</tissue>
    </source>
</reference>
<reference key="7">
    <citation type="journal article" date="2012" name="Proc. Natl. Acad. Sci. U.S.A.">
        <title>N-terminal acetylome analyses and functional insights of the N-terminal acetyltransferase NatB.</title>
        <authorList>
            <person name="Van Damme P."/>
            <person name="Lasa M."/>
            <person name="Polevoda B."/>
            <person name="Gazquez C."/>
            <person name="Elosegui-Artola A."/>
            <person name="Kim D.S."/>
            <person name="De Juan-Pardo E."/>
            <person name="Demeyer K."/>
            <person name="Hole K."/>
            <person name="Larrea E."/>
            <person name="Timmerman E."/>
            <person name="Prieto J."/>
            <person name="Arnesen T."/>
            <person name="Sherman F."/>
            <person name="Gevaert K."/>
            <person name="Aldabe R."/>
        </authorList>
    </citation>
    <scope>IDENTIFICATION BY MASS SPECTROMETRY [LARGE SCALE ANALYSIS]</scope>
</reference>
<reference key="8">
    <citation type="journal article" date="2014" name="J. Proteomics">
        <title>An enzyme assisted RP-RPLC approach for in-depth analysis of human liver phosphoproteome.</title>
        <authorList>
            <person name="Bian Y."/>
            <person name="Song C."/>
            <person name="Cheng K."/>
            <person name="Dong M."/>
            <person name="Wang F."/>
            <person name="Huang J."/>
            <person name="Sun D."/>
            <person name="Wang L."/>
            <person name="Ye M."/>
            <person name="Zou H."/>
        </authorList>
    </citation>
    <scope>IDENTIFICATION BY MASS SPECTROMETRY [LARGE SCALE ANALYSIS]</scope>
    <source>
        <tissue>Liver</tissue>
    </source>
</reference>
<reference key="9">
    <citation type="journal article" date="2005" name="Nat. Genet.">
        <title>Maternal segregation of the Dutch preeclampsia locus at 10q22 with a new member of the winged helix gene family.</title>
        <authorList>
            <person name="van Dijk M."/>
            <person name="Mulders J."/>
            <person name="Poutsma A."/>
            <person name="Koenst A.A.M."/>
            <person name="Lachmeijer A.M.A."/>
            <person name="Dekker G.A."/>
            <person name="Blankenstein M.A."/>
            <person name="Oudejans C.B.M."/>
        </authorList>
    </citation>
    <scope>VARIANTS CYS-17 AND ARG-257</scope>
    <source>
        <tissue>Placenta</tissue>
    </source>
</reference>
<reference key="10">
    <citation type="journal article" date="2012" name="Hum. Mol. Genet.">
        <title>Next generation sequencing identifies mutations in Atonal homolog 7 (ATOH7) in families with global eye developmental defects.</title>
        <authorList>
            <person name="Khan K."/>
            <person name="Logan C.V."/>
            <person name="McKibbin M."/>
            <person name="Sheridan E."/>
            <person name="Elcioglu N.H."/>
            <person name="Yenice O."/>
            <person name="Parry D.A."/>
            <person name="Fernandez-Fuentes N."/>
            <person name="Abdelhamed Z.I."/>
            <person name="Al-Maskari A."/>
            <person name="Poulter J.A."/>
            <person name="Mohamed M.D."/>
            <person name="Carr I.M."/>
            <person name="Morgan J.E."/>
            <person name="Jafri H."/>
            <person name="Raashid Y."/>
            <person name="Taylor G.R."/>
            <person name="Johnson C.A."/>
            <person name="Inglehearn C.F."/>
            <person name="Toomes C."/>
            <person name="Ali M."/>
        </authorList>
    </citation>
    <scope>VARIANT ILE-62</scope>
</reference>
<protein>
    <recommendedName>
        <fullName>Phenazine biosynthesis-like domain-containing protein</fullName>
        <ecNumber>5.1.-.-</ecNumber>
    </recommendedName>
    <alternativeName>
        <fullName>MAWD-binding protein</fullName>
        <shortName>MAWDBP</shortName>
    </alternativeName>
    <alternativeName>
        <fullName>Unknown protein 32 from 2D-page of liver tissue</fullName>
    </alternativeName>
</protein>
<sequence length="288" mass="31785">MKLPIFIADAFTARAFRGNPAAVCLLENELDEDMHQKIAREMNLSETAFIRKLHPTDNFAQSSCFGLRWFTPASEVPLCGHATLASAAVLFHKIKNMNSTLTFVTLSGELRARRAEDGIVLDLPLYPAHPQDFHEVEDLIKTAIGNTLVQDICYSPDTQKLLVRLSDVYNRSFLENLKVNTENLLQVENTGKVKGLILTLKGEPGGQTQAFDFYSRYFAPWVGVAEDPVTGSAHAVLSSYWSQHLGKKEMHAFQCSHRGGELGISLRPDGRVDIRGGAAVVLEGTLTA</sequence>
<gene>
    <name type="primary">PBLD</name>
    <name type="synonym">MAWBP</name>
</gene>
<dbReference type="EC" id="5.1.-.-"/>
<dbReference type="EMBL" id="AK027673">
    <property type="protein sequence ID" value="BAB55285.1"/>
    <property type="status" value="ALT_FRAME"/>
    <property type="molecule type" value="mRNA"/>
</dbReference>
<dbReference type="EMBL" id="AC016395">
    <property type="status" value="NOT_ANNOTATED_CDS"/>
    <property type="molecule type" value="Genomic_DNA"/>
</dbReference>
<dbReference type="EMBL" id="CH471083">
    <property type="protein sequence ID" value="EAW54274.1"/>
    <property type="molecule type" value="Genomic_DNA"/>
</dbReference>
<dbReference type="EMBL" id="CH471083">
    <property type="protein sequence ID" value="EAW54273.1"/>
    <property type="molecule type" value="Genomic_DNA"/>
</dbReference>
<dbReference type="EMBL" id="BC009738">
    <property type="protein sequence ID" value="AAH09738.1"/>
    <property type="molecule type" value="mRNA"/>
</dbReference>
<dbReference type="EMBL" id="AB049758">
    <property type="protein sequence ID" value="BAB16606.1"/>
    <property type="molecule type" value="mRNA"/>
</dbReference>
<dbReference type="CCDS" id="CCDS44413.1">
    <molecule id="P30039-2"/>
</dbReference>
<dbReference type="CCDS" id="CCDS7277.2">
    <molecule id="P30039-1"/>
</dbReference>
<dbReference type="RefSeq" id="NP_001028255.1">
    <molecule id="P30039-2"/>
    <property type="nucleotide sequence ID" value="NM_001033083.2"/>
</dbReference>
<dbReference type="RefSeq" id="NP_071412.2">
    <molecule id="P30039-1"/>
    <property type="nucleotide sequence ID" value="NM_022129.4"/>
</dbReference>
<dbReference type="RefSeq" id="XP_005270085.1">
    <molecule id="P30039-1"/>
    <property type="nucleotide sequence ID" value="XM_005270028.5"/>
</dbReference>
<dbReference type="RefSeq" id="XP_054222508.1">
    <molecule id="P30039-1"/>
    <property type="nucleotide sequence ID" value="XM_054366533.1"/>
</dbReference>
<dbReference type="SMR" id="P30039"/>
<dbReference type="BioGRID" id="122047">
    <property type="interactions" value="23"/>
</dbReference>
<dbReference type="FunCoup" id="P30039">
    <property type="interactions" value="221"/>
</dbReference>
<dbReference type="IntAct" id="P30039">
    <property type="interactions" value="17"/>
</dbReference>
<dbReference type="STRING" id="9606.ENSP00000351619"/>
<dbReference type="iPTMnet" id="P30039"/>
<dbReference type="PhosphoSitePlus" id="P30039"/>
<dbReference type="BioMuta" id="PBLD"/>
<dbReference type="DMDM" id="17380331"/>
<dbReference type="jPOST" id="P30039"/>
<dbReference type="MassIVE" id="P30039"/>
<dbReference type="PaxDb" id="9606-ENSP00000351619"/>
<dbReference type="PeptideAtlas" id="P30039"/>
<dbReference type="ProteomicsDB" id="10356"/>
<dbReference type="ProteomicsDB" id="54618">
    <molecule id="P30039-1"/>
</dbReference>
<dbReference type="Pumba" id="P30039"/>
<dbReference type="Antibodypedia" id="28440">
    <property type="antibodies" value="253 antibodies from 23 providers"/>
</dbReference>
<dbReference type="DNASU" id="64081"/>
<dbReference type="Ensembl" id="ENST00000309049.8">
    <molecule id="P30039-1"/>
    <property type="protein sequence ID" value="ENSP00000308466.4"/>
    <property type="gene ID" value="ENSG00000108187.16"/>
</dbReference>
<dbReference type="Ensembl" id="ENST00000358769.7">
    <molecule id="P30039-1"/>
    <property type="protein sequence ID" value="ENSP00000351619.2"/>
    <property type="gene ID" value="ENSG00000108187.16"/>
</dbReference>
<dbReference type="Ensembl" id="ENST00000495025.2">
    <molecule id="P30039-2"/>
    <property type="protein sequence ID" value="ENSP00000476306.1"/>
    <property type="gene ID" value="ENSG00000108187.16"/>
</dbReference>
<dbReference type="GeneID" id="64081"/>
<dbReference type="KEGG" id="hsa:64081"/>
<dbReference type="MANE-Select" id="ENST00000358769.7">
    <property type="protein sequence ID" value="ENSP00000351619.2"/>
    <property type="RefSeq nucleotide sequence ID" value="NM_022129.4"/>
    <property type="RefSeq protein sequence ID" value="NP_071412.2"/>
</dbReference>
<dbReference type="UCSC" id="uc001jnr.1">
    <molecule id="P30039-1"/>
    <property type="organism name" value="human"/>
</dbReference>
<dbReference type="AGR" id="HGNC:23301"/>
<dbReference type="CTD" id="64081"/>
<dbReference type="DisGeNET" id="64081"/>
<dbReference type="GeneCards" id="PBLD"/>
<dbReference type="HGNC" id="HGNC:23301">
    <property type="gene designation" value="PBLD"/>
</dbReference>
<dbReference type="HPA" id="ENSG00000108187">
    <property type="expression patterns" value="Group enriched (intestine, kidney, liver)"/>
</dbReference>
<dbReference type="MIM" id="612189">
    <property type="type" value="gene"/>
</dbReference>
<dbReference type="neXtProt" id="NX_P30039"/>
<dbReference type="OpenTargets" id="ENSG00000108187"/>
<dbReference type="PharmGKB" id="PA162398821"/>
<dbReference type="VEuPathDB" id="HostDB:ENSG00000108187"/>
<dbReference type="eggNOG" id="KOG3033">
    <property type="taxonomic scope" value="Eukaryota"/>
</dbReference>
<dbReference type="GeneTree" id="ENSGT00390000017595"/>
<dbReference type="HOGENOM" id="CLU_048756_2_0_1"/>
<dbReference type="InParanoid" id="P30039"/>
<dbReference type="OMA" id="DWALRWF"/>
<dbReference type="OrthoDB" id="75169at2759"/>
<dbReference type="PAN-GO" id="P30039">
    <property type="GO annotations" value="2 GO annotations based on evolutionary models"/>
</dbReference>
<dbReference type="PhylomeDB" id="P30039"/>
<dbReference type="TreeFam" id="TF314596"/>
<dbReference type="PathwayCommons" id="P30039"/>
<dbReference type="SignaLink" id="P30039"/>
<dbReference type="BioGRID-ORCS" id="64081">
    <property type="hits" value="18 hits in 1155 CRISPR screens"/>
</dbReference>
<dbReference type="ChiTaRS" id="PBLD">
    <property type="organism name" value="human"/>
</dbReference>
<dbReference type="GenomeRNAi" id="64081"/>
<dbReference type="Pharos" id="P30039">
    <property type="development level" value="Tbio"/>
</dbReference>
<dbReference type="PRO" id="PR:P30039"/>
<dbReference type="Proteomes" id="UP000005640">
    <property type="component" value="Chromosome 10"/>
</dbReference>
<dbReference type="RNAct" id="P30039">
    <property type="molecule type" value="protein"/>
</dbReference>
<dbReference type="Bgee" id="ENSG00000108187">
    <property type="expression patterns" value="Expressed in nephron tubule and 173 other cell types or tissues"/>
</dbReference>
<dbReference type="ExpressionAtlas" id="P30039">
    <property type="expression patterns" value="baseline and differential"/>
</dbReference>
<dbReference type="GO" id="GO:0005737">
    <property type="term" value="C:cytoplasm"/>
    <property type="evidence" value="ECO:0000314"/>
    <property type="project" value="UniProtKB"/>
</dbReference>
<dbReference type="GO" id="GO:0070062">
    <property type="term" value="C:extracellular exosome"/>
    <property type="evidence" value="ECO:0007005"/>
    <property type="project" value="UniProtKB"/>
</dbReference>
<dbReference type="GO" id="GO:0042802">
    <property type="term" value="F:identical protein binding"/>
    <property type="evidence" value="ECO:0000353"/>
    <property type="project" value="IntAct"/>
</dbReference>
<dbReference type="GO" id="GO:0016853">
    <property type="term" value="F:isomerase activity"/>
    <property type="evidence" value="ECO:0000318"/>
    <property type="project" value="GO_Central"/>
</dbReference>
<dbReference type="GO" id="GO:0009058">
    <property type="term" value="P:biosynthetic process"/>
    <property type="evidence" value="ECO:0007669"/>
    <property type="project" value="InterPro"/>
</dbReference>
<dbReference type="GO" id="GO:0030277">
    <property type="term" value="P:maintenance of gastrointestinal epithelium"/>
    <property type="evidence" value="ECO:0000315"/>
    <property type="project" value="UniProtKB"/>
</dbReference>
<dbReference type="GO" id="GO:0030512">
    <property type="term" value="P:negative regulation of transforming growth factor beta receptor signaling pathway"/>
    <property type="evidence" value="ECO:0000315"/>
    <property type="project" value="UniProtKB"/>
</dbReference>
<dbReference type="FunFam" id="3.10.310.10:FF:000013">
    <property type="entry name" value="Phenazine biosynthesis-like domain-containing protein 1"/>
    <property type="match status" value="1"/>
</dbReference>
<dbReference type="FunFam" id="3.10.310.10:FF:000020">
    <property type="entry name" value="Phenazine biosynthesis-like domain-containing protein 1"/>
    <property type="match status" value="1"/>
</dbReference>
<dbReference type="Gene3D" id="3.10.310.10">
    <property type="entry name" value="Diaminopimelate Epimerase, Chain A, domain 1"/>
    <property type="match status" value="2"/>
</dbReference>
<dbReference type="InterPro" id="IPR003719">
    <property type="entry name" value="Phenazine_PhzF-like"/>
</dbReference>
<dbReference type="NCBIfam" id="TIGR00654">
    <property type="entry name" value="PhzF_family"/>
    <property type="match status" value="1"/>
</dbReference>
<dbReference type="PANTHER" id="PTHR13774">
    <property type="entry name" value="PHENAZINE BIOSYNTHESIS PROTEIN"/>
    <property type="match status" value="1"/>
</dbReference>
<dbReference type="PANTHER" id="PTHR13774:SF17">
    <property type="entry name" value="PHENAZINE BIOSYNTHESIS-LIKE DOMAIN-CONTAINING PROTEIN"/>
    <property type="match status" value="1"/>
</dbReference>
<dbReference type="Pfam" id="PF02567">
    <property type="entry name" value="PhzC-PhzF"/>
    <property type="match status" value="1"/>
</dbReference>
<dbReference type="PIRSF" id="PIRSF016184">
    <property type="entry name" value="PhzC_PhzF"/>
    <property type="match status" value="1"/>
</dbReference>
<dbReference type="SUPFAM" id="SSF54506">
    <property type="entry name" value="Diaminopimelate epimerase-like"/>
    <property type="match status" value="1"/>
</dbReference>
<evidence type="ECO:0000250" key="1"/>
<evidence type="ECO:0000269" key="2">
    <source>
    </source>
</evidence>
<evidence type="ECO:0000269" key="3">
    <source>
    </source>
</evidence>
<evidence type="ECO:0000305" key="4"/>
<comment type="subunit">
    <text>Interacts with UNRIP/MAWD.</text>
</comment>
<comment type="interaction">
    <interactant intactId="EBI-750589">
        <id>P30039</id>
    </interactant>
    <interactant intactId="EBI-17286414">
        <id>A2BDD9</id>
        <label>AMOT</label>
    </interactant>
    <organismsDiffer>false</organismsDiffer>
    <experiments>3</experiments>
</comment>
<comment type="interaction">
    <interactant intactId="EBI-750589">
        <id>P30039</id>
    </interactant>
    <interactant intactId="EBI-10181188">
        <id>Q8N7W2-2</id>
        <label>BEND7</label>
    </interactant>
    <organismsDiffer>false</organismsDiffer>
    <experiments>3</experiments>
</comment>
<comment type="interaction">
    <interactant intactId="EBI-750589">
        <id>P30039</id>
    </interactant>
    <interactant intactId="EBI-10179526">
        <id>Q52MB2</id>
        <label>CCDC184</label>
    </interactant>
    <organismsDiffer>false</organismsDiffer>
    <experiments>6</experiments>
</comment>
<comment type="interaction">
    <interactant intactId="EBI-750589">
        <id>P30039</id>
    </interactant>
    <interactant intactId="EBI-2349927">
        <id>Q5JST6</id>
        <label>EFHC2</label>
    </interactant>
    <organismsDiffer>false</organismsDiffer>
    <experiments>7</experiments>
</comment>
<comment type="interaction">
    <interactant intactId="EBI-750589">
        <id>P30039</id>
    </interactant>
    <interactant intactId="EBI-740418">
        <id>O75791</id>
        <label>GRAP2</label>
    </interactant>
    <organismsDiffer>false</organismsDiffer>
    <experiments>3</experiments>
</comment>
<comment type="interaction">
    <interactant intactId="EBI-750589">
        <id>P30039</id>
    </interactant>
    <interactant intactId="EBI-739832">
        <id>Q8TBB1</id>
        <label>LNX1</label>
    </interactant>
    <organismsDiffer>false</organismsDiffer>
    <experiments>3</experiments>
</comment>
<comment type="interaction">
    <interactant intactId="EBI-750589">
        <id>P30039</id>
    </interactant>
    <interactant intactId="EBI-750589">
        <id>P30039</id>
        <label>PBLD</label>
    </interactant>
    <organismsDiffer>false</organismsDiffer>
    <experiments>4</experiments>
</comment>
<comment type="interaction">
    <interactant intactId="EBI-750589">
        <id>P30039</id>
    </interactant>
    <interactant intactId="EBI-10691507">
        <id>Q5SXH7</id>
        <label>PLEKHS1</label>
    </interactant>
    <organismsDiffer>false</organismsDiffer>
    <experiments>2</experiments>
</comment>
<comment type="interaction">
    <interactant intactId="EBI-750589">
        <id>P30039</id>
    </interactant>
    <interactant intactId="EBI-533224">
        <id>P15884</id>
        <label>TCF4</label>
    </interactant>
    <organismsDiffer>false</organismsDiffer>
    <experiments>3</experiments>
</comment>
<comment type="interaction">
    <interactant intactId="EBI-750589">
        <id>P30039</id>
    </interactant>
    <interactant intactId="EBI-358993">
        <id>Q15645</id>
        <label>TRIP13</label>
    </interactant>
    <organismsDiffer>false</organismsDiffer>
    <experiments>4</experiments>
</comment>
<comment type="interaction">
    <interactant intactId="EBI-750589">
        <id>P30039</id>
    </interactant>
    <interactant intactId="EBI-2107455">
        <id>Q08AM6</id>
        <label>VAC14</label>
    </interactant>
    <organismsDiffer>false</organismsDiffer>
    <experiments>3</experiments>
</comment>
<comment type="interaction">
    <interactant intactId="EBI-750589">
        <id>P30039</id>
    </interactant>
    <interactant intactId="EBI-527853">
        <id>Q9UGI0</id>
        <label>ZRANB1</label>
    </interactant>
    <organismsDiffer>false</organismsDiffer>
    <experiments>6</experiments>
</comment>
<comment type="alternative products">
    <event type="alternative splicing"/>
    <isoform>
        <id>P30039-1</id>
        <name>1</name>
        <sequence type="displayed"/>
    </isoform>
    <isoform>
        <id>P30039-2</id>
        <name>2</name>
        <sequence type="described" ref="VSP_053822"/>
    </isoform>
</comment>
<comment type="similarity">
    <text evidence="4">Belongs to the PhzF family.</text>
</comment>
<comment type="sequence caution" evidence="4">
    <conflict type="frameshift">
        <sequence resource="EMBL-CDS" id="BAB55285"/>
    </conflict>
</comment>
<name>PBLD_HUMAN</name>
<accession>P30039</accession>
<accession>A8MZJ3</accession>
<accession>C9JIM0</accession>
<accession>Q9HCC2</accession>
<keyword id="KW-0025">Alternative splicing</keyword>
<keyword id="KW-0903">Direct protein sequencing</keyword>
<keyword id="KW-0413">Isomerase</keyword>
<keyword id="KW-1267">Proteomics identification</keyword>
<keyword id="KW-1185">Reference proteome</keyword>
<organism>
    <name type="scientific">Homo sapiens</name>
    <name type="common">Human</name>
    <dbReference type="NCBI Taxonomy" id="9606"/>
    <lineage>
        <taxon>Eukaryota</taxon>
        <taxon>Metazoa</taxon>
        <taxon>Chordata</taxon>
        <taxon>Craniata</taxon>
        <taxon>Vertebrata</taxon>
        <taxon>Euteleostomi</taxon>
        <taxon>Mammalia</taxon>
        <taxon>Eutheria</taxon>
        <taxon>Euarchontoglires</taxon>
        <taxon>Primates</taxon>
        <taxon>Haplorrhini</taxon>
        <taxon>Catarrhini</taxon>
        <taxon>Hominidae</taxon>
        <taxon>Homo</taxon>
    </lineage>
</organism>